<organism>
    <name type="scientific">Roseobacter denitrificans (strain ATCC 33942 / OCh 114)</name>
    <name type="common">Erythrobacter sp. (strain OCh 114)</name>
    <name type="synonym">Roseobacter denitrificans</name>
    <dbReference type="NCBI Taxonomy" id="375451"/>
    <lineage>
        <taxon>Bacteria</taxon>
        <taxon>Pseudomonadati</taxon>
        <taxon>Pseudomonadota</taxon>
        <taxon>Alphaproteobacteria</taxon>
        <taxon>Rhodobacterales</taxon>
        <taxon>Roseobacteraceae</taxon>
        <taxon>Roseobacter</taxon>
    </lineage>
</organism>
<sequence length="255" mass="27038">MSLVDVDGLSLRYGARTVLSRVSLSIAPGEIVTIVGPNGSGKTSLLRAIIGAVKPFQGRVTRGAGVTLGYVPQKLHIDETLPMTVARFLRLPGGASEAEIDQALAQAGVRDLSGSQLAQLSGGQFQRVMLARALIGKPDLLLLDEATQGLDQRGSASFYQQIEQVRRDTGCAVLMISHELHVVMSASDRVICLNGHVCCEGTPAVVASAPEYRALFGTGTGGALALYRHEHDHEHDHHDGCAHGQATEDRTEAAE</sequence>
<dbReference type="EC" id="7.2.2.20" evidence="1"/>
<dbReference type="EMBL" id="CP000362">
    <property type="protein sequence ID" value="ABG33454.1"/>
    <property type="molecule type" value="Genomic_DNA"/>
</dbReference>
<dbReference type="RefSeq" id="WP_011570065.1">
    <property type="nucleotide sequence ID" value="NC_008209.1"/>
</dbReference>
<dbReference type="SMR" id="Q160Y9"/>
<dbReference type="STRING" id="375451.RD1_4006"/>
<dbReference type="KEGG" id="rde:RD1_4006"/>
<dbReference type="eggNOG" id="COG1121">
    <property type="taxonomic scope" value="Bacteria"/>
</dbReference>
<dbReference type="HOGENOM" id="CLU_000604_1_11_5"/>
<dbReference type="OrthoDB" id="9780942at2"/>
<dbReference type="Proteomes" id="UP000007029">
    <property type="component" value="Chromosome"/>
</dbReference>
<dbReference type="GO" id="GO:0005886">
    <property type="term" value="C:plasma membrane"/>
    <property type="evidence" value="ECO:0007669"/>
    <property type="project" value="UniProtKB-SubCell"/>
</dbReference>
<dbReference type="GO" id="GO:0015633">
    <property type="term" value="F:ABC-type zinc transporter activity"/>
    <property type="evidence" value="ECO:0007669"/>
    <property type="project" value="UniProtKB-EC"/>
</dbReference>
<dbReference type="GO" id="GO:0005524">
    <property type="term" value="F:ATP binding"/>
    <property type="evidence" value="ECO:0007669"/>
    <property type="project" value="UniProtKB-KW"/>
</dbReference>
<dbReference type="GO" id="GO:0016887">
    <property type="term" value="F:ATP hydrolysis activity"/>
    <property type="evidence" value="ECO:0007669"/>
    <property type="project" value="InterPro"/>
</dbReference>
<dbReference type="GO" id="GO:0010043">
    <property type="term" value="P:response to zinc ion"/>
    <property type="evidence" value="ECO:0007669"/>
    <property type="project" value="TreeGrafter"/>
</dbReference>
<dbReference type="Gene3D" id="3.40.50.300">
    <property type="entry name" value="P-loop containing nucleotide triphosphate hydrolases"/>
    <property type="match status" value="1"/>
</dbReference>
<dbReference type="InterPro" id="IPR003593">
    <property type="entry name" value="AAA+_ATPase"/>
</dbReference>
<dbReference type="InterPro" id="IPR003439">
    <property type="entry name" value="ABC_transporter-like_ATP-bd"/>
</dbReference>
<dbReference type="InterPro" id="IPR017871">
    <property type="entry name" value="ABC_transporter-like_CS"/>
</dbReference>
<dbReference type="InterPro" id="IPR050153">
    <property type="entry name" value="Metal_Ion_Import_ABC"/>
</dbReference>
<dbReference type="InterPro" id="IPR027417">
    <property type="entry name" value="P-loop_NTPase"/>
</dbReference>
<dbReference type="PANTHER" id="PTHR42734">
    <property type="entry name" value="METAL TRANSPORT SYSTEM ATP-BINDING PROTEIN TM_0124-RELATED"/>
    <property type="match status" value="1"/>
</dbReference>
<dbReference type="PANTHER" id="PTHR42734:SF9">
    <property type="entry name" value="ZINC IMPORT ATP-BINDING PROTEIN ZNUC"/>
    <property type="match status" value="1"/>
</dbReference>
<dbReference type="Pfam" id="PF00005">
    <property type="entry name" value="ABC_tran"/>
    <property type="match status" value="1"/>
</dbReference>
<dbReference type="SMART" id="SM00382">
    <property type="entry name" value="AAA"/>
    <property type="match status" value="1"/>
</dbReference>
<dbReference type="SUPFAM" id="SSF52540">
    <property type="entry name" value="P-loop containing nucleoside triphosphate hydrolases"/>
    <property type="match status" value="1"/>
</dbReference>
<dbReference type="PROSITE" id="PS00211">
    <property type="entry name" value="ABC_TRANSPORTER_1"/>
    <property type="match status" value="1"/>
</dbReference>
<dbReference type="PROSITE" id="PS50893">
    <property type="entry name" value="ABC_TRANSPORTER_2"/>
    <property type="match status" value="1"/>
</dbReference>
<dbReference type="PROSITE" id="PS51298">
    <property type="entry name" value="ZNUC"/>
    <property type="match status" value="1"/>
</dbReference>
<accession>Q160Y9</accession>
<keyword id="KW-0067">ATP-binding</keyword>
<keyword id="KW-0997">Cell inner membrane</keyword>
<keyword id="KW-1003">Cell membrane</keyword>
<keyword id="KW-0406">Ion transport</keyword>
<keyword id="KW-0472">Membrane</keyword>
<keyword id="KW-0547">Nucleotide-binding</keyword>
<keyword id="KW-1185">Reference proteome</keyword>
<keyword id="KW-1278">Translocase</keyword>
<keyword id="KW-0813">Transport</keyword>
<keyword id="KW-0862">Zinc</keyword>
<keyword id="KW-0864">Zinc transport</keyword>
<evidence type="ECO:0000255" key="1">
    <source>
        <dbReference type="HAMAP-Rule" id="MF_01725"/>
    </source>
</evidence>
<evidence type="ECO:0000256" key="2">
    <source>
        <dbReference type="SAM" id="MobiDB-lite"/>
    </source>
</evidence>
<comment type="function">
    <text evidence="1">Part of the ABC transporter complex ZnuABC involved in zinc import. Responsible for energy coupling to the transport system.</text>
</comment>
<comment type="catalytic activity">
    <reaction evidence="1">
        <text>Zn(2+)(out) + ATP(in) + H2O(in) = Zn(2+)(in) + ADP(in) + phosphate(in) + H(+)(in)</text>
        <dbReference type="Rhea" id="RHEA:29795"/>
        <dbReference type="ChEBI" id="CHEBI:15377"/>
        <dbReference type="ChEBI" id="CHEBI:15378"/>
        <dbReference type="ChEBI" id="CHEBI:29105"/>
        <dbReference type="ChEBI" id="CHEBI:30616"/>
        <dbReference type="ChEBI" id="CHEBI:43474"/>
        <dbReference type="ChEBI" id="CHEBI:456216"/>
        <dbReference type="EC" id="7.2.2.20"/>
    </reaction>
</comment>
<comment type="subunit">
    <text evidence="1">The complex is composed of two ATP-binding proteins (ZnuC), two transmembrane proteins (ZnuB) and a solute-binding protein (ZnuA).</text>
</comment>
<comment type="subcellular location">
    <subcellularLocation>
        <location evidence="1">Cell inner membrane</location>
        <topology evidence="1">Peripheral membrane protein</topology>
    </subcellularLocation>
</comment>
<comment type="similarity">
    <text evidence="1">Belongs to the ABC transporter superfamily. Zinc importer (TC 3.A.1.15.5) family.</text>
</comment>
<name>ZNUC_ROSDO</name>
<feature type="chain" id="PRO_0000281544" description="Zinc import ATP-binding protein ZnuC">
    <location>
        <begin position="1"/>
        <end position="255"/>
    </location>
</feature>
<feature type="domain" description="ABC transporter" evidence="1">
    <location>
        <begin position="4"/>
        <end position="219"/>
    </location>
</feature>
<feature type="region of interest" description="Disordered" evidence="2">
    <location>
        <begin position="234"/>
        <end position="255"/>
    </location>
</feature>
<feature type="binding site" evidence="1">
    <location>
        <begin position="36"/>
        <end position="43"/>
    </location>
    <ligand>
        <name>ATP</name>
        <dbReference type="ChEBI" id="CHEBI:30616"/>
    </ligand>
</feature>
<reference key="1">
    <citation type="journal article" date="2007" name="J. Bacteriol.">
        <title>The complete genome sequence of Roseobacter denitrificans reveals a mixotrophic rather than photosynthetic metabolism.</title>
        <authorList>
            <person name="Swingley W.D."/>
            <person name="Sadekar S."/>
            <person name="Mastrian S.D."/>
            <person name="Matthies H.J."/>
            <person name="Hao J."/>
            <person name="Ramos H."/>
            <person name="Acharya C.R."/>
            <person name="Conrad A.L."/>
            <person name="Taylor H.L."/>
            <person name="Dejesa L.C."/>
            <person name="Shah M.K."/>
            <person name="O'Huallachain M.E."/>
            <person name="Lince M.T."/>
            <person name="Blankenship R.E."/>
            <person name="Beatty J.T."/>
            <person name="Touchman J.W."/>
        </authorList>
    </citation>
    <scope>NUCLEOTIDE SEQUENCE [LARGE SCALE GENOMIC DNA]</scope>
    <source>
        <strain>ATCC 33942 / OCh 114</strain>
    </source>
</reference>
<proteinExistence type="inferred from homology"/>
<protein>
    <recommendedName>
        <fullName evidence="1">Zinc import ATP-binding protein ZnuC</fullName>
        <ecNumber evidence="1">7.2.2.20</ecNumber>
    </recommendedName>
</protein>
<gene>
    <name evidence="1" type="primary">znuC</name>
    <name type="ordered locus">RD1_4006</name>
</gene>